<organism>
    <name type="scientific">Aspergillus oryzae (strain ATCC 42149 / RIB 40)</name>
    <name type="common">Yellow koji mold</name>
    <dbReference type="NCBI Taxonomy" id="510516"/>
    <lineage>
        <taxon>Eukaryota</taxon>
        <taxon>Fungi</taxon>
        <taxon>Dikarya</taxon>
        <taxon>Ascomycota</taxon>
        <taxon>Pezizomycotina</taxon>
        <taxon>Eurotiomycetes</taxon>
        <taxon>Eurotiomycetidae</taxon>
        <taxon>Eurotiales</taxon>
        <taxon>Aspergillaceae</taxon>
        <taxon>Aspergillus</taxon>
        <taxon>Aspergillus subgen. Circumdati</taxon>
    </lineage>
</organism>
<keyword id="KW-0256">Endoplasmic reticulum</keyword>
<keyword id="KW-0328">Glycosyltransferase</keyword>
<keyword id="KW-0337">GPI-anchor biosynthesis</keyword>
<keyword id="KW-0472">Membrane</keyword>
<keyword id="KW-1185">Reference proteome</keyword>
<keyword id="KW-0808">Transferase</keyword>
<keyword id="KW-0812">Transmembrane</keyword>
<keyword id="KW-1133">Transmembrane helix</keyword>
<sequence>MAAGLALARPNLLNPNNPIRSLSLAFWLWKAFVFLIIIGCPGPGYDTSTGLLPYQESAASGAKLEAIRHAPFSFPLKLVRWDSIYFVHIVRDDYVFEQEWAFGYGYTRILSFLTSVALSHIAHYFSVLALYRLSINIFGHDNTSGALISFLSATLHIICPAGAFLSAPYGESLFSFLNITGYFLYSSSLLDANAGKRASSDAKLLLAAALFSIATAVRSNGILSGALFAFDALLQLRKIFTQGISGDILLRLGVIVVGGCVIALGLIVPQWIAYTTFCMSDEPLRPWCEQLIPSIYGWVQVHYWNVGFLRYWTLSNLPLFILAFPMLFLMCRSSIWALNTAWPLDTATAVLTRLAAPNGLLAVMAFTSYHVQIINRISSGYPLWYWYIICQLSSHVADSSSVVKRSQTFSIAIQGMVIYAIVQAVLFGSFLPPA</sequence>
<comment type="function">
    <text evidence="1">Mannosyltransferase involved in glycosylphosphatidylinositol-anchor biosynthesis. Transfers the second mannose to the glycosylphosphatidylinositol during GPI precursor assembly (By similarity).</text>
</comment>
<comment type="pathway">
    <text>Glycolipid biosynthesis; glycosylphosphatidylinositol-anchor biosynthesis.</text>
</comment>
<comment type="subcellular location">
    <subcellularLocation>
        <location evidence="1">Endoplasmic reticulum membrane</location>
        <topology evidence="1">Multi-pass membrane protein</topology>
    </subcellularLocation>
</comment>
<comment type="similarity">
    <text evidence="3">Belongs to the PIGV family.</text>
</comment>
<name>GPI18_ASPOR</name>
<dbReference type="EC" id="2.4.1.-"/>
<dbReference type="EMBL" id="BA000050">
    <property type="protein sequence ID" value="BAE58188.1"/>
    <property type="molecule type" value="Genomic_DNA"/>
</dbReference>
<dbReference type="STRING" id="510516.Q2UJS7"/>
<dbReference type="CAZy" id="GT76">
    <property type="family name" value="Glycosyltransferase Family 76"/>
</dbReference>
<dbReference type="EnsemblFungi" id="BAE58188">
    <property type="protein sequence ID" value="BAE58188"/>
    <property type="gene ID" value="AO090003001092"/>
</dbReference>
<dbReference type="HOGENOM" id="CLU_029048_0_0_1"/>
<dbReference type="OMA" id="CEWTLPS"/>
<dbReference type="UniPathway" id="UPA00196"/>
<dbReference type="Proteomes" id="UP000006564">
    <property type="component" value="Chromosome 2"/>
</dbReference>
<dbReference type="GO" id="GO:0005789">
    <property type="term" value="C:endoplasmic reticulum membrane"/>
    <property type="evidence" value="ECO:0007669"/>
    <property type="project" value="UniProtKB-SubCell"/>
</dbReference>
<dbReference type="GO" id="GO:0031501">
    <property type="term" value="C:mannosyltransferase complex"/>
    <property type="evidence" value="ECO:0007669"/>
    <property type="project" value="TreeGrafter"/>
</dbReference>
<dbReference type="GO" id="GO:0000009">
    <property type="term" value="F:alpha-1,6-mannosyltransferase activity"/>
    <property type="evidence" value="ECO:0007669"/>
    <property type="project" value="InterPro"/>
</dbReference>
<dbReference type="GO" id="GO:0004376">
    <property type="term" value="F:glycolipid mannosyltransferase activity"/>
    <property type="evidence" value="ECO:0007669"/>
    <property type="project" value="InterPro"/>
</dbReference>
<dbReference type="GO" id="GO:0006506">
    <property type="term" value="P:GPI anchor biosynthetic process"/>
    <property type="evidence" value="ECO:0007669"/>
    <property type="project" value="UniProtKB-UniPathway"/>
</dbReference>
<dbReference type="InterPro" id="IPR007315">
    <property type="entry name" value="PIG-V/Gpi18"/>
</dbReference>
<dbReference type="PANTHER" id="PTHR12468">
    <property type="entry name" value="GPI MANNOSYLTRANSFERASE 2"/>
    <property type="match status" value="1"/>
</dbReference>
<dbReference type="PANTHER" id="PTHR12468:SF2">
    <property type="entry name" value="GPI MANNOSYLTRANSFERASE 2"/>
    <property type="match status" value="1"/>
</dbReference>
<dbReference type="Pfam" id="PF04188">
    <property type="entry name" value="Mannosyl_trans2"/>
    <property type="match status" value="2"/>
</dbReference>
<protein>
    <recommendedName>
        <fullName>GPI mannosyltransferase 2</fullName>
        <ecNumber>2.4.1.-</ecNumber>
    </recommendedName>
    <alternativeName>
        <fullName>GPI mannosyltransferase II</fullName>
        <shortName>GPI-MT-II</shortName>
    </alternativeName>
    <alternativeName>
        <fullName>Glycosylphosphatidylinositol-anchor biosynthesis protein 18</fullName>
    </alternativeName>
</protein>
<proteinExistence type="inferred from homology"/>
<feature type="chain" id="PRO_0000246241" description="GPI mannosyltransferase 2">
    <location>
        <begin position="1"/>
        <end position="434"/>
    </location>
</feature>
<feature type="transmembrane region" description="Helical" evidence="2">
    <location>
        <begin position="22"/>
        <end position="42"/>
    </location>
</feature>
<feature type="transmembrane region" description="Helical" evidence="2">
    <location>
        <begin position="109"/>
        <end position="129"/>
    </location>
</feature>
<feature type="transmembrane region" description="Helical" evidence="2">
    <location>
        <begin position="145"/>
        <end position="165"/>
    </location>
</feature>
<feature type="transmembrane region" description="Helical" evidence="2">
    <location>
        <begin position="170"/>
        <end position="190"/>
    </location>
</feature>
<feature type="transmembrane region" description="Helical" evidence="2">
    <location>
        <begin position="210"/>
        <end position="230"/>
    </location>
</feature>
<feature type="transmembrane region" description="Helical" evidence="2">
    <location>
        <begin position="252"/>
        <end position="272"/>
    </location>
</feature>
<feature type="transmembrane region" description="Helical" evidence="2">
    <location>
        <begin position="311"/>
        <end position="331"/>
    </location>
</feature>
<feature type="transmembrane region" description="Helical" evidence="2">
    <location>
        <begin position="354"/>
        <end position="374"/>
    </location>
</feature>
<feature type="transmembrane region" description="Helical" evidence="2">
    <location>
        <begin position="377"/>
        <end position="397"/>
    </location>
</feature>
<feature type="transmembrane region" description="Helical" evidence="2">
    <location>
        <begin position="411"/>
        <end position="431"/>
    </location>
</feature>
<accession>Q2UJS7</accession>
<evidence type="ECO:0000250" key="1"/>
<evidence type="ECO:0000255" key="2"/>
<evidence type="ECO:0000305" key="3"/>
<gene>
    <name type="primary">gpi18</name>
    <name type="ORF">AO090003001092</name>
</gene>
<reference key="1">
    <citation type="journal article" date="2005" name="Nature">
        <title>Genome sequencing and analysis of Aspergillus oryzae.</title>
        <authorList>
            <person name="Machida M."/>
            <person name="Asai K."/>
            <person name="Sano M."/>
            <person name="Tanaka T."/>
            <person name="Kumagai T."/>
            <person name="Terai G."/>
            <person name="Kusumoto K."/>
            <person name="Arima T."/>
            <person name="Akita O."/>
            <person name="Kashiwagi Y."/>
            <person name="Abe K."/>
            <person name="Gomi K."/>
            <person name="Horiuchi H."/>
            <person name="Kitamoto K."/>
            <person name="Kobayashi T."/>
            <person name="Takeuchi M."/>
            <person name="Denning D.W."/>
            <person name="Galagan J.E."/>
            <person name="Nierman W.C."/>
            <person name="Yu J."/>
            <person name="Archer D.B."/>
            <person name="Bennett J.W."/>
            <person name="Bhatnagar D."/>
            <person name="Cleveland T.E."/>
            <person name="Fedorova N.D."/>
            <person name="Gotoh O."/>
            <person name="Horikawa H."/>
            <person name="Hosoyama A."/>
            <person name="Ichinomiya M."/>
            <person name="Igarashi R."/>
            <person name="Iwashita K."/>
            <person name="Juvvadi P.R."/>
            <person name="Kato M."/>
            <person name="Kato Y."/>
            <person name="Kin T."/>
            <person name="Kokubun A."/>
            <person name="Maeda H."/>
            <person name="Maeyama N."/>
            <person name="Maruyama J."/>
            <person name="Nagasaki H."/>
            <person name="Nakajima T."/>
            <person name="Oda K."/>
            <person name="Okada K."/>
            <person name="Paulsen I."/>
            <person name="Sakamoto K."/>
            <person name="Sawano T."/>
            <person name="Takahashi M."/>
            <person name="Takase K."/>
            <person name="Terabayashi Y."/>
            <person name="Wortman J.R."/>
            <person name="Yamada O."/>
            <person name="Yamagata Y."/>
            <person name="Anazawa H."/>
            <person name="Hata Y."/>
            <person name="Koide Y."/>
            <person name="Komori T."/>
            <person name="Koyama Y."/>
            <person name="Minetoki T."/>
            <person name="Suharnan S."/>
            <person name="Tanaka A."/>
            <person name="Isono K."/>
            <person name="Kuhara S."/>
            <person name="Ogasawara N."/>
            <person name="Kikuchi H."/>
        </authorList>
    </citation>
    <scope>NUCLEOTIDE SEQUENCE [LARGE SCALE GENOMIC DNA]</scope>
    <source>
        <strain>ATCC 42149 / RIB 40</strain>
    </source>
</reference>